<evidence type="ECO:0000255" key="1">
    <source>
        <dbReference type="HAMAP-Rule" id="MF_00344"/>
    </source>
</evidence>
<organism>
    <name type="scientific">Escherichia coli (strain ATCC 8739 / DSM 1576 / NBRC 3972 / NCIMB 8545 / WDCM 00012 / Crooks)</name>
    <dbReference type="NCBI Taxonomy" id="481805"/>
    <lineage>
        <taxon>Bacteria</taxon>
        <taxon>Pseudomonadati</taxon>
        <taxon>Pseudomonadota</taxon>
        <taxon>Gammaproteobacteria</taxon>
        <taxon>Enterobacterales</taxon>
        <taxon>Enterobacteriaceae</taxon>
        <taxon>Escherichia</taxon>
    </lineage>
</organism>
<keyword id="KW-0067">ATP-binding</keyword>
<keyword id="KW-0315">Glutamine amidotransferase</keyword>
<keyword id="KW-0332">GMP biosynthesis</keyword>
<keyword id="KW-0436">Ligase</keyword>
<keyword id="KW-0547">Nucleotide-binding</keyword>
<keyword id="KW-0658">Purine biosynthesis</keyword>
<gene>
    <name evidence="1" type="primary">guaA</name>
    <name type="ordered locus">EcolC_1170</name>
</gene>
<sequence>MTENIHKHRILILDFGSQYTQLVARRVRELGVYCELWAWDVTEAQIRDFNPSGIILSGGPESTTEENSPRAPQYVFEAGVPVFGVCYGMQTMAMQLGGHVEASNEREFGYAQVEVVNDSALVRGIEDALTADGKPLLDVWMSHGDKVTAIPSDFVTVASTESCPFAIMANEEKRFYGVQFHPEVTHTRQGMRMLERFVRDICQCEALWTPAKIIDDAVARIREQVGDDKVILGLSGGVDSSVTAMLLHRAIGKNLTCVFVDNGLLRLNEAEQVLDMFGDHFGLNIVHVPAEDRFLSALAGENDPEAKRKIIGRVFVEVFDEEALKLEDVKWLAQGTIYPDVIESAASATGKAHVIKSHHNVGGLPKEMKMGLVEPLKELFKDEVRKIGLELGLPYDMLYRHPFPGPGLGVRVLGEVKKEYCDLLRRADAIFIEELRKADLYDKVSQAFTVFLPVRSVGVMGDGRKYDWVVSLRAVETIDFMTAHWAHLPYDFLGRVSNRIINEVNGISRVVYDISGKPPATIEWE</sequence>
<comment type="function">
    <text evidence="1">Catalyzes the synthesis of GMP from XMP.</text>
</comment>
<comment type="catalytic activity">
    <reaction evidence="1">
        <text>XMP + L-glutamine + ATP + H2O = GMP + L-glutamate + AMP + diphosphate + 2 H(+)</text>
        <dbReference type="Rhea" id="RHEA:11680"/>
        <dbReference type="ChEBI" id="CHEBI:15377"/>
        <dbReference type="ChEBI" id="CHEBI:15378"/>
        <dbReference type="ChEBI" id="CHEBI:29985"/>
        <dbReference type="ChEBI" id="CHEBI:30616"/>
        <dbReference type="ChEBI" id="CHEBI:33019"/>
        <dbReference type="ChEBI" id="CHEBI:57464"/>
        <dbReference type="ChEBI" id="CHEBI:58115"/>
        <dbReference type="ChEBI" id="CHEBI:58359"/>
        <dbReference type="ChEBI" id="CHEBI:456215"/>
        <dbReference type="EC" id="6.3.5.2"/>
    </reaction>
</comment>
<comment type="pathway">
    <text evidence="1">Purine metabolism; GMP biosynthesis; GMP from XMP (L-Gln route): step 1/1.</text>
</comment>
<comment type="subunit">
    <text evidence="1">Homodimer.</text>
</comment>
<accession>B1IWF4</accession>
<protein>
    <recommendedName>
        <fullName evidence="1">GMP synthase [glutamine-hydrolyzing]</fullName>
        <ecNumber evidence="1">6.3.5.2</ecNumber>
    </recommendedName>
    <alternativeName>
        <fullName evidence="1">GMP synthetase</fullName>
    </alternativeName>
    <alternativeName>
        <fullName evidence="1">Glutamine amidotransferase</fullName>
    </alternativeName>
</protein>
<reference key="1">
    <citation type="submission" date="2008-02" db="EMBL/GenBank/DDBJ databases">
        <title>Complete sequence of Escherichia coli C str. ATCC 8739.</title>
        <authorList>
            <person name="Copeland A."/>
            <person name="Lucas S."/>
            <person name="Lapidus A."/>
            <person name="Glavina del Rio T."/>
            <person name="Dalin E."/>
            <person name="Tice H."/>
            <person name="Bruce D."/>
            <person name="Goodwin L."/>
            <person name="Pitluck S."/>
            <person name="Kiss H."/>
            <person name="Brettin T."/>
            <person name="Detter J.C."/>
            <person name="Han C."/>
            <person name="Kuske C.R."/>
            <person name="Schmutz J."/>
            <person name="Larimer F."/>
            <person name="Land M."/>
            <person name="Hauser L."/>
            <person name="Kyrpides N."/>
            <person name="Mikhailova N."/>
            <person name="Ingram L."/>
            <person name="Richardson P."/>
        </authorList>
    </citation>
    <scope>NUCLEOTIDE SEQUENCE [LARGE SCALE GENOMIC DNA]</scope>
    <source>
        <strain>ATCC 8739 / DSM 1576 / NBRC 3972 / NCIMB 8545 / WDCM 00012 / Crooks</strain>
    </source>
</reference>
<proteinExistence type="inferred from homology"/>
<feature type="chain" id="PRO_1000120287" description="GMP synthase [glutamine-hydrolyzing]">
    <location>
        <begin position="1"/>
        <end position="525"/>
    </location>
</feature>
<feature type="domain" description="Glutamine amidotransferase type-1" evidence="1">
    <location>
        <begin position="9"/>
        <end position="207"/>
    </location>
</feature>
<feature type="domain" description="GMPS ATP-PPase" evidence="1">
    <location>
        <begin position="208"/>
        <end position="400"/>
    </location>
</feature>
<feature type="active site" description="Nucleophile" evidence="1">
    <location>
        <position position="86"/>
    </location>
</feature>
<feature type="active site" evidence="1">
    <location>
        <position position="181"/>
    </location>
</feature>
<feature type="active site" evidence="1">
    <location>
        <position position="183"/>
    </location>
</feature>
<feature type="binding site" evidence="1">
    <location>
        <begin position="235"/>
        <end position="241"/>
    </location>
    <ligand>
        <name>ATP</name>
        <dbReference type="ChEBI" id="CHEBI:30616"/>
    </ligand>
</feature>
<dbReference type="EC" id="6.3.5.2" evidence="1"/>
<dbReference type="EMBL" id="CP000946">
    <property type="protein sequence ID" value="ACA76837.1"/>
    <property type="molecule type" value="Genomic_DNA"/>
</dbReference>
<dbReference type="RefSeq" id="WP_000138282.1">
    <property type="nucleotide sequence ID" value="NZ_MTFT01000002.1"/>
</dbReference>
<dbReference type="SMR" id="B1IWF4"/>
<dbReference type="MEROPS" id="C26.957"/>
<dbReference type="GeneID" id="75172615"/>
<dbReference type="KEGG" id="ecl:EcolC_1170"/>
<dbReference type="HOGENOM" id="CLU_014340_0_5_6"/>
<dbReference type="UniPathway" id="UPA00189">
    <property type="reaction ID" value="UER00296"/>
</dbReference>
<dbReference type="GO" id="GO:0005829">
    <property type="term" value="C:cytosol"/>
    <property type="evidence" value="ECO:0007669"/>
    <property type="project" value="TreeGrafter"/>
</dbReference>
<dbReference type="GO" id="GO:0005524">
    <property type="term" value="F:ATP binding"/>
    <property type="evidence" value="ECO:0007669"/>
    <property type="project" value="UniProtKB-UniRule"/>
</dbReference>
<dbReference type="GO" id="GO:0003921">
    <property type="term" value="F:GMP synthase activity"/>
    <property type="evidence" value="ECO:0007669"/>
    <property type="project" value="InterPro"/>
</dbReference>
<dbReference type="CDD" id="cd01742">
    <property type="entry name" value="GATase1_GMP_Synthase"/>
    <property type="match status" value="1"/>
</dbReference>
<dbReference type="CDD" id="cd01997">
    <property type="entry name" value="GMP_synthase_C"/>
    <property type="match status" value="1"/>
</dbReference>
<dbReference type="FunFam" id="3.30.300.10:FF:000002">
    <property type="entry name" value="GMP synthase [glutamine-hydrolyzing]"/>
    <property type="match status" value="1"/>
</dbReference>
<dbReference type="FunFam" id="3.40.50.620:FF:000001">
    <property type="entry name" value="GMP synthase [glutamine-hydrolyzing]"/>
    <property type="match status" value="1"/>
</dbReference>
<dbReference type="FunFam" id="3.40.50.880:FF:000001">
    <property type="entry name" value="GMP synthase [glutamine-hydrolyzing]"/>
    <property type="match status" value="1"/>
</dbReference>
<dbReference type="Gene3D" id="3.30.300.10">
    <property type="match status" value="1"/>
</dbReference>
<dbReference type="Gene3D" id="3.40.50.880">
    <property type="match status" value="1"/>
</dbReference>
<dbReference type="Gene3D" id="3.40.50.620">
    <property type="entry name" value="HUPs"/>
    <property type="match status" value="1"/>
</dbReference>
<dbReference type="HAMAP" id="MF_00344">
    <property type="entry name" value="GMP_synthase"/>
    <property type="match status" value="1"/>
</dbReference>
<dbReference type="InterPro" id="IPR029062">
    <property type="entry name" value="Class_I_gatase-like"/>
</dbReference>
<dbReference type="InterPro" id="IPR017926">
    <property type="entry name" value="GATASE"/>
</dbReference>
<dbReference type="InterPro" id="IPR001674">
    <property type="entry name" value="GMP_synth_C"/>
</dbReference>
<dbReference type="InterPro" id="IPR004739">
    <property type="entry name" value="GMP_synth_GATase"/>
</dbReference>
<dbReference type="InterPro" id="IPR022955">
    <property type="entry name" value="GMP_synthase"/>
</dbReference>
<dbReference type="InterPro" id="IPR025777">
    <property type="entry name" value="GMPS_ATP_PPase_dom"/>
</dbReference>
<dbReference type="InterPro" id="IPR022310">
    <property type="entry name" value="NAD/GMP_synthase"/>
</dbReference>
<dbReference type="InterPro" id="IPR014729">
    <property type="entry name" value="Rossmann-like_a/b/a_fold"/>
</dbReference>
<dbReference type="NCBIfam" id="TIGR00884">
    <property type="entry name" value="guaA_Cterm"/>
    <property type="match status" value="1"/>
</dbReference>
<dbReference type="NCBIfam" id="TIGR00888">
    <property type="entry name" value="guaA_Nterm"/>
    <property type="match status" value="1"/>
</dbReference>
<dbReference type="NCBIfam" id="NF000848">
    <property type="entry name" value="PRK00074.1"/>
    <property type="match status" value="1"/>
</dbReference>
<dbReference type="PANTHER" id="PTHR11922:SF2">
    <property type="entry name" value="GMP SYNTHASE [GLUTAMINE-HYDROLYZING]"/>
    <property type="match status" value="1"/>
</dbReference>
<dbReference type="PANTHER" id="PTHR11922">
    <property type="entry name" value="GMP SYNTHASE-RELATED"/>
    <property type="match status" value="1"/>
</dbReference>
<dbReference type="Pfam" id="PF00117">
    <property type="entry name" value="GATase"/>
    <property type="match status" value="1"/>
</dbReference>
<dbReference type="Pfam" id="PF00958">
    <property type="entry name" value="GMP_synt_C"/>
    <property type="match status" value="1"/>
</dbReference>
<dbReference type="Pfam" id="PF02540">
    <property type="entry name" value="NAD_synthase"/>
    <property type="match status" value="1"/>
</dbReference>
<dbReference type="PRINTS" id="PR00097">
    <property type="entry name" value="ANTSNTHASEII"/>
</dbReference>
<dbReference type="PRINTS" id="PR00099">
    <property type="entry name" value="CPSGATASE"/>
</dbReference>
<dbReference type="PRINTS" id="PR00096">
    <property type="entry name" value="GATASE"/>
</dbReference>
<dbReference type="SUPFAM" id="SSF52402">
    <property type="entry name" value="Adenine nucleotide alpha hydrolases-like"/>
    <property type="match status" value="1"/>
</dbReference>
<dbReference type="SUPFAM" id="SSF52317">
    <property type="entry name" value="Class I glutamine amidotransferase-like"/>
    <property type="match status" value="1"/>
</dbReference>
<dbReference type="SUPFAM" id="SSF54810">
    <property type="entry name" value="GMP synthetase C-terminal dimerisation domain"/>
    <property type="match status" value="1"/>
</dbReference>
<dbReference type="PROSITE" id="PS51273">
    <property type="entry name" value="GATASE_TYPE_1"/>
    <property type="match status" value="1"/>
</dbReference>
<dbReference type="PROSITE" id="PS51553">
    <property type="entry name" value="GMPS_ATP_PPASE"/>
    <property type="match status" value="1"/>
</dbReference>
<name>GUAA_ECOLC</name>